<organism>
    <name type="scientific">Caenorhabditis briggsae</name>
    <dbReference type="NCBI Taxonomy" id="6238"/>
    <lineage>
        <taxon>Eukaryota</taxon>
        <taxon>Metazoa</taxon>
        <taxon>Ecdysozoa</taxon>
        <taxon>Nematoda</taxon>
        <taxon>Chromadorea</taxon>
        <taxon>Rhabditida</taxon>
        <taxon>Rhabditina</taxon>
        <taxon>Rhabditomorpha</taxon>
        <taxon>Rhabditoidea</taxon>
        <taxon>Rhabditidae</taxon>
        <taxon>Peloderinae</taxon>
        <taxon>Caenorhabditis</taxon>
    </lineage>
</organism>
<dbReference type="EMBL" id="HE601102">
    <property type="protein sequence ID" value="CAP20486.1"/>
    <property type="molecule type" value="Genomic_DNA"/>
</dbReference>
<dbReference type="RefSeq" id="XP_002638651.1">
    <property type="nucleotide sequence ID" value="XM_002638605.1"/>
</dbReference>
<dbReference type="SMR" id="A8WJ42"/>
<dbReference type="FunCoup" id="A8WJ42">
    <property type="interactions" value="2104"/>
</dbReference>
<dbReference type="EnsemblMetazoa" id="CBG23705.1">
    <property type="protein sequence ID" value="CBG23705.1"/>
    <property type="gene ID" value="WBGene00041989"/>
</dbReference>
<dbReference type="GeneID" id="8580648"/>
<dbReference type="KEGG" id="cbr:CBG_23705"/>
<dbReference type="CTD" id="8580648"/>
<dbReference type="WormBase" id="CBG23705">
    <property type="protein sequence ID" value="CBP13191"/>
    <property type="gene ID" value="WBGene00041989"/>
</dbReference>
<dbReference type="eggNOG" id="KOG4094">
    <property type="taxonomic scope" value="Eukaryota"/>
</dbReference>
<dbReference type="HOGENOM" id="CLU_118274_0_1_1"/>
<dbReference type="InParanoid" id="A8WJ42"/>
<dbReference type="OMA" id="AWNQDYW"/>
<dbReference type="Proteomes" id="UP000008549">
    <property type="component" value="Unassembled WGS sequence"/>
</dbReference>
<dbReference type="GO" id="GO:0005743">
    <property type="term" value="C:mitochondrial inner membrane"/>
    <property type="evidence" value="ECO:0007669"/>
    <property type="project" value="UniProtKB-SubCell"/>
</dbReference>
<dbReference type="GO" id="GO:0005739">
    <property type="term" value="C:mitochondrion"/>
    <property type="evidence" value="ECO:0000318"/>
    <property type="project" value="GO_Central"/>
</dbReference>
<dbReference type="GO" id="GO:0097193">
    <property type="term" value="P:intrinsic apoptotic signaling pathway"/>
    <property type="evidence" value="ECO:0007669"/>
    <property type="project" value="InterPro"/>
</dbReference>
<dbReference type="InterPro" id="IPR018796">
    <property type="entry name" value="COA8"/>
</dbReference>
<dbReference type="PANTHER" id="PTHR31107">
    <property type="entry name" value="APOPTOGENIC PROTEIN 1, MITOCHONDRIAL"/>
    <property type="match status" value="1"/>
</dbReference>
<dbReference type="PANTHER" id="PTHR31107:SF2">
    <property type="entry name" value="CYTOCHROME C OXIDASE ASSEMBLY FACTOR 8"/>
    <property type="match status" value="1"/>
</dbReference>
<dbReference type="Pfam" id="PF10231">
    <property type="entry name" value="COA8"/>
    <property type="match status" value="1"/>
</dbReference>
<proteinExistence type="inferred from homology"/>
<gene>
    <name type="ORF">CBG23705</name>
</gene>
<reference key="1">
    <citation type="journal article" date="2003" name="PLoS Biol.">
        <title>The genome sequence of Caenorhabditis briggsae: a platform for comparative genomics.</title>
        <authorList>
            <person name="Stein L.D."/>
            <person name="Bao Z."/>
            <person name="Blasiar D."/>
            <person name="Blumenthal T."/>
            <person name="Brent M.R."/>
            <person name="Chen N."/>
            <person name="Chinwalla A."/>
            <person name="Clarke L."/>
            <person name="Clee C."/>
            <person name="Coghlan A."/>
            <person name="Coulson A."/>
            <person name="D'Eustachio P."/>
            <person name="Fitch D.H.A."/>
            <person name="Fulton L.A."/>
            <person name="Fulton R.E."/>
            <person name="Griffiths-Jones S."/>
            <person name="Harris T.W."/>
            <person name="Hillier L.W."/>
            <person name="Kamath R."/>
            <person name="Kuwabara P.E."/>
            <person name="Mardis E.R."/>
            <person name="Marra M.A."/>
            <person name="Miner T.L."/>
            <person name="Minx P."/>
            <person name="Mullikin J.C."/>
            <person name="Plumb R.W."/>
            <person name="Rogers J."/>
            <person name="Schein J.E."/>
            <person name="Sohrmann M."/>
            <person name="Spieth J."/>
            <person name="Stajich J.E."/>
            <person name="Wei C."/>
            <person name="Willey D."/>
            <person name="Wilson R.K."/>
            <person name="Durbin R.M."/>
            <person name="Waterston R.H."/>
        </authorList>
    </citation>
    <scope>NUCLEOTIDE SEQUENCE [LARGE SCALE GENOMIC DNA]</scope>
    <source>
        <strain>AF16</strain>
    </source>
</reference>
<keyword id="KW-0053">Apoptosis</keyword>
<keyword id="KW-0472">Membrane</keyword>
<keyword id="KW-0496">Mitochondrion</keyword>
<keyword id="KW-0999">Mitochondrion inner membrane</keyword>
<keyword id="KW-1185">Reference proteome</keyword>
<keyword id="KW-0809">Transit peptide</keyword>
<feature type="transit peptide" description="Mitochondrion" evidence="3">
    <location>
        <begin position="1"/>
        <end status="unknown"/>
    </location>
</feature>
<feature type="chain" id="PRO_0000353111" description="COA8 family protein CBG23705, mitochondrial">
    <location>
        <begin status="unknown"/>
        <end position="142"/>
    </location>
</feature>
<comment type="function">
    <text evidence="1">May be required for cytochrome c complex (COX) assembly and function, COX being the terminal component of the mitochondrial respiratory chain.</text>
</comment>
<comment type="subcellular location">
    <subcellularLocation>
        <location evidence="2">Mitochondrion inner membrane</location>
        <topology evidence="1">Peripheral membrane protein</topology>
        <orientation evidence="1">Matrix side</orientation>
    </subcellularLocation>
</comment>
<comment type="similarity">
    <text evidence="4">Belongs to the COA8 family.</text>
</comment>
<name>COA8_CAEBR</name>
<protein>
    <recommendedName>
        <fullName evidence="4">COA8 family protein CBG23705, mitochondrial</fullName>
        <shortName evidence="4">COA8</shortName>
    </recommendedName>
    <alternativeName>
        <fullName>APOPT family protein CBG23705, mitochondrial</fullName>
    </alternativeName>
</protein>
<sequence>MSSLSSSSSNVRMDRRFDWVGPPDSVSKIRKIMLRRVDNESELERQYRAAREELNQWNSDFWAEHNQLFDRQKSEFVEKKQKELGRLEHVSANELSEFYRDFLNDRHVAMMVYNKEWYRRNLQLIWPALKVNVVRFFRMARR</sequence>
<evidence type="ECO:0000250" key="1">
    <source>
        <dbReference type="UniProtKB" id="Q96IL0"/>
    </source>
</evidence>
<evidence type="ECO:0000250" key="2">
    <source>
        <dbReference type="UniProtKB" id="Q9CQW7"/>
    </source>
</evidence>
<evidence type="ECO:0000255" key="3"/>
<evidence type="ECO:0000305" key="4"/>
<accession>A8WJ42</accession>